<keyword id="KW-1003">Cell membrane</keyword>
<keyword id="KW-1017">Isopeptide bond</keyword>
<keyword id="KW-0472">Membrane</keyword>
<keyword id="KW-0832">Ubl conjugation</keyword>
<organism>
    <name type="scientific">Saccharomyces cerevisiae (strain JAY291)</name>
    <name type="common">Baker's yeast</name>
    <dbReference type="NCBI Taxonomy" id="574961"/>
    <lineage>
        <taxon>Eukaryota</taxon>
        <taxon>Fungi</taxon>
        <taxon>Dikarya</taxon>
        <taxon>Ascomycota</taxon>
        <taxon>Saccharomycotina</taxon>
        <taxon>Saccharomycetes</taxon>
        <taxon>Saccharomycetales</taxon>
        <taxon>Saccharomycetaceae</taxon>
        <taxon>Saccharomyces</taxon>
    </lineage>
</organism>
<reference key="1">
    <citation type="journal article" date="2009" name="Genome Res.">
        <title>Genome structure of a Saccharomyces cerevisiae strain widely used in bioethanol production.</title>
        <authorList>
            <person name="Argueso J.L."/>
            <person name="Carazzolle M.F."/>
            <person name="Mieczkowski P.A."/>
            <person name="Duarte F.M."/>
            <person name="Netto O.V.C."/>
            <person name="Missawa S.K."/>
            <person name="Galzerani F."/>
            <person name="Costa G.G.L."/>
            <person name="Vidal R.O."/>
            <person name="Noronha M.F."/>
            <person name="Dominska M."/>
            <person name="Andrietta M.G.S."/>
            <person name="Andrietta S.R."/>
            <person name="Cunha A.F."/>
            <person name="Gomes L.H."/>
            <person name="Tavares F.C.A."/>
            <person name="Alcarde A.R."/>
            <person name="Dietrich F.S."/>
            <person name="McCusker J.H."/>
            <person name="Petes T.D."/>
            <person name="Pereira G.A.G."/>
        </authorList>
    </citation>
    <scope>NUCLEOTIDE SEQUENCE [LARGE SCALE GENOMIC DNA]</scope>
    <source>
        <strain>JAY291</strain>
    </source>
</reference>
<gene>
    <name type="primary">RGI1</name>
    <name type="ORF">C1Q_03050</name>
</gene>
<evidence type="ECO:0000250" key="1"/>
<evidence type="ECO:0000250" key="2">
    <source>
        <dbReference type="UniProtKB" id="P40043"/>
    </source>
</evidence>
<evidence type="ECO:0000305" key="3"/>
<accession>C7GRP9</accession>
<proteinExistence type="inferred from homology"/>
<name>RGI1_YEAS2</name>
<dbReference type="EMBL" id="ACFL01000153">
    <property type="protein sequence ID" value="EEU06507.1"/>
    <property type="molecule type" value="Genomic_DNA"/>
</dbReference>
<dbReference type="SMR" id="C7GRP9"/>
<dbReference type="Proteomes" id="UP000008073">
    <property type="component" value="Unassembled WGS sequence"/>
</dbReference>
<dbReference type="GO" id="GO:0005886">
    <property type="term" value="C:plasma membrane"/>
    <property type="evidence" value="ECO:0007669"/>
    <property type="project" value="UniProtKB-SubCell"/>
</dbReference>
<dbReference type="GO" id="GO:0006112">
    <property type="term" value="P:energy reserve metabolic process"/>
    <property type="evidence" value="ECO:0007669"/>
    <property type="project" value="InterPro"/>
</dbReference>
<dbReference type="FunFam" id="3.40.1000.40:FF:000001">
    <property type="entry name" value="Respiratory growth induced protein 2"/>
    <property type="match status" value="1"/>
</dbReference>
<dbReference type="Gene3D" id="3.40.1000.40">
    <property type="entry name" value="Respiratory growth induced protein 1"/>
    <property type="match status" value="1"/>
</dbReference>
<dbReference type="InterPro" id="IPR022554">
    <property type="entry name" value="RGI1"/>
</dbReference>
<dbReference type="InterPro" id="IPR038235">
    <property type="entry name" value="RGI1_sf"/>
</dbReference>
<dbReference type="Pfam" id="PF10843">
    <property type="entry name" value="RGI1"/>
    <property type="match status" value="1"/>
</dbReference>
<feature type="chain" id="PRO_0000402294" description="Respiratory growth induced protein 1">
    <location>
        <begin position="1"/>
        <end position="161"/>
    </location>
</feature>
<feature type="cross-link" description="Glycyl lysine isopeptide (Lys-Gly) (interchain with G-Cter in ubiquitin)" evidence="2">
    <location>
        <position position="68"/>
    </location>
</feature>
<comment type="function">
    <text evidence="1">Involved in the control of energetic metabolism and significantly contribute to cell fitness, especially under respiratory growth conditions.</text>
</comment>
<comment type="subcellular location">
    <subcellularLocation>
        <location evidence="1">Cell membrane</location>
        <topology evidence="1">Peripheral membrane protein</topology>
    </subcellularLocation>
</comment>
<comment type="similarity">
    <text evidence="3">Belongs to the RGI1 family.</text>
</comment>
<protein>
    <recommendedName>
        <fullName>Respiratory growth induced protein 1</fullName>
    </recommendedName>
</protein>
<sequence>MTKKDKKEVKVQTVTTEDGETVKVFEDLQGFETFIANETEDDDFDHLHCKLNYYPPFVLHESHEDPEKISDAANSHSKKFVRHLHQHIEKHLLKDIKQAVRKPELKFHEKSKEETFDKITWHYGEETEYHGRPFKIDVQVVCTHEDAMVFVDYKTHPVGAN</sequence>